<reference key="1">
    <citation type="submission" date="2005-09" db="EMBL/GenBank/DDBJ databases">
        <authorList>
            <consortium name="NIH - Mammalian Gene Collection (MGC) project"/>
        </authorList>
    </citation>
    <scope>NUCLEOTIDE SEQUENCE [LARGE SCALE MRNA]</scope>
    <source>
        <strain>Hereford</strain>
        <tissue>Hypothalamus</tissue>
    </source>
</reference>
<protein>
    <recommendedName>
        <fullName>Calcium/calmodulin-dependent protein kinase type II subunit beta</fullName>
        <shortName>CaM kinase II subunit beta</shortName>
        <shortName>CaMK-II subunit beta</shortName>
        <ecNumber evidence="4">2.7.11.17</ecNumber>
    </recommendedName>
</protein>
<feature type="chain" id="PRO_0000260268" description="Calcium/calmodulin-dependent protein kinase type II subunit beta">
    <location>
        <begin position="1"/>
        <end position="542"/>
    </location>
</feature>
<feature type="domain" description="Protein kinase" evidence="5">
    <location>
        <begin position="14"/>
        <end position="272"/>
    </location>
</feature>
<feature type="region of interest" description="Autoinhibitory domain" evidence="1">
    <location>
        <begin position="283"/>
        <end position="292"/>
    </location>
</feature>
<feature type="region of interest" description="Calmodulin-binding">
    <location>
        <begin position="291"/>
        <end position="301"/>
    </location>
</feature>
<feature type="region of interest" description="Disordered" evidence="7">
    <location>
        <begin position="349"/>
        <end position="407"/>
    </location>
</feature>
<feature type="compositionally biased region" description="Polar residues" evidence="7">
    <location>
        <begin position="354"/>
        <end position="369"/>
    </location>
</feature>
<feature type="active site" description="Proton acceptor" evidence="5 6">
    <location>
        <position position="136"/>
    </location>
</feature>
<feature type="binding site" evidence="5">
    <location>
        <begin position="20"/>
        <end position="28"/>
    </location>
    <ligand>
        <name>ATP</name>
        <dbReference type="ChEBI" id="CHEBI:30616"/>
    </ligand>
</feature>
<feature type="binding site" evidence="5">
    <location>
        <position position="43"/>
    </location>
    <ligand>
        <name>ATP</name>
        <dbReference type="ChEBI" id="CHEBI:30616"/>
    </ligand>
</feature>
<feature type="modified residue" description="Phosphotyrosine" evidence="3">
    <location>
        <position position="17"/>
    </location>
</feature>
<feature type="modified residue" description="Phosphothreonine; by autocatalysis" evidence="4">
    <location>
        <position position="287"/>
    </location>
</feature>
<feature type="modified residue" description="Phosphothreonine; by autocatalysis" evidence="1">
    <location>
        <position position="306"/>
    </location>
</feature>
<feature type="modified residue" description="Phosphothreonine; by autocatalysis" evidence="1">
    <location>
        <position position="307"/>
    </location>
</feature>
<feature type="modified residue" description="Phosphoserine" evidence="2">
    <location>
        <position position="367"/>
    </location>
</feature>
<feature type="modified residue" description="Phosphoserine" evidence="3">
    <location>
        <position position="394"/>
    </location>
</feature>
<feature type="modified residue" description="Phosphoserine" evidence="2">
    <location>
        <position position="397"/>
    </location>
</feature>
<feature type="modified residue" description="Phosphothreonine" evidence="3">
    <location>
        <position position="400"/>
    </location>
</feature>
<feature type="modified residue" description="Phosphothreonine" evidence="4">
    <location>
        <position position="401"/>
    </location>
</feature>
<evidence type="ECO:0000250" key="1"/>
<evidence type="ECO:0000250" key="2">
    <source>
        <dbReference type="UniProtKB" id="P08413"/>
    </source>
</evidence>
<evidence type="ECO:0000250" key="3">
    <source>
        <dbReference type="UniProtKB" id="P28652"/>
    </source>
</evidence>
<evidence type="ECO:0000250" key="4">
    <source>
        <dbReference type="UniProtKB" id="Q13554"/>
    </source>
</evidence>
<evidence type="ECO:0000255" key="5">
    <source>
        <dbReference type="PROSITE-ProRule" id="PRU00159"/>
    </source>
</evidence>
<evidence type="ECO:0000255" key="6">
    <source>
        <dbReference type="PROSITE-ProRule" id="PRU10027"/>
    </source>
</evidence>
<evidence type="ECO:0000256" key="7">
    <source>
        <dbReference type="SAM" id="MobiDB-lite"/>
    </source>
</evidence>
<evidence type="ECO:0000305" key="8"/>
<gene>
    <name type="primary">CAMK2B</name>
</gene>
<keyword id="KW-0067">ATP-binding</keyword>
<keyword id="KW-0112">Calmodulin-binding</keyword>
<keyword id="KW-0963">Cytoplasm</keyword>
<keyword id="KW-0206">Cytoskeleton</keyword>
<keyword id="KW-0221">Differentiation</keyword>
<keyword id="KW-0418">Kinase</keyword>
<keyword id="KW-0472">Membrane</keyword>
<keyword id="KW-0524">Neurogenesis</keyword>
<keyword id="KW-0547">Nucleotide-binding</keyword>
<keyword id="KW-0597">Phosphoprotein</keyword>
<keyword id="KW-1185">Reference proteome</keyword>
<keyword id="KW-0703">Sarcoplasmic reticulum</keyword>
<keyword id="KW-0723">Serine/threonine-protein kinase</keyword>
<keyword id="KW-0770">Synapse</keyword>
<keyword id="KW-0808">Transferase</keyword>
<name>KCC2B_BOVIN</name>
<dbReference type="EC" id="2.7.11.17" evidence="4"/>
<dbReference type="EMBL" id="BC105210">
    <property type="protein sequence ID" value="AAI05211.1"/>
    <property type="molecule type" value="mRNA"/>
</dbReference>
<dbReference type="RefSeq" id="NP_001030434.1">
    <property type="nucleotide sequence ID" value="NM_001035357.2"/>
</dbReference>
<dbReference type="SMR" id="Q3MHJ9"/>
<dbReference type="FunCoup" id="Q3MHJ9">
    <property type="interactions" value="867"/>
</dbReference>
<dbReference type="STRING" id="9913.ENSBTAP00000061316"/>
<dbReference type="PaxDb" id="9913-ENSBTAP00000016813"/>
<dbReference type="PeptideAtlas" id="Q3MHJ9"/>
<dbReference type="GeneID" id="525416"/>
<dbReference type="KEGG" id="bta:525416"/>
<dbReference type="CTD" id="816"/>
<dbReference type="VEuPathDB" id="HostDB:ENSBTAG00000012653"/>
<dbReference type="eggNOG" id="KOG0033">
    <property type="taxonomic scope" value="Eukaryota"/>
</dbReference>
<dbReference type="HOGENOM" id="CLU_000288_71_0_1"/>
<dbReference type="InParanoid" id="Q3MHJ9"/>
<dbReference type="OMA" id="MEFHRFY"/>
<dbReference type="OrthoDB" id="336747at2759"/>
<dbReference type="TreeFam" id="TF315229"/>
<dbReference type="Reactome" id="R-BTA-3371571">
    <property type="pathway name" value="HSF1-dependent transactivation"/>
</dbReference>
<dbReference type="Reactome" id="R-BTA-399719">
    <property type="pathway name" value="Trafficking of AMPA receptors"/>
</dbReference>
<dbReference type="Reactome" id="R-BTA-438066">
    <property type="pathway name" value="Unblocking of NMDA receptors, glutamate binding and activation"/>
</dbReference>
<dbReference type="Reactome" id="R-BTA-5576892">
    <property type="pathway name" value="Phase 0 - rapid depolarisation"/>
</dbReference>
<dbReference type="Reactome" id="R-BTA-5578775">
    <property type="pathway name" value="Ion homeostasis"/>
</dbReference>
<dbReference type="Reactome" id="R-BTA-5673000">
    <property type="pathway name" value="RAF activation"/>
</dbReference>
<dbReference type="Reactome" id="R-BTA-5673001">
    <property type="pathway name" value="RAF/MAP kinase cascade"/>
</dbReference>
<dbReference type="Reactome" id="R-BTA-877300">
    <property type="pathway name" value="Interferon gamma signaling"/>
</dbReference>
<dbReference type="Reactome" id="R-BTA-936837">
    <property type="pathway name" value="Ion transport by P-type ATPases"/>
</dbReference>
<dbReference type="Proteomes" id="UP000009136">
    <property type="component" value="Chromosome 4"/>
</dbReference>
<dbReference type="Bgee" id="ENSBTAG00000012653">
    <property type="expression patterns" value="Expressed in Ammon's horn and 74 other cell types or tissues"/>
</dbReference>
<dbReference type="GO" id="GO:0005813">
    <property type="term" value="C:centrosome"/>
    <property type="evidence" value="ECO:0007669"/>
    <property type="project" value="UniProtKB-SubCell"/>
</dbReference>
<dbReference type="GO" id="GO:0005737">
    <property type="term" value="C:cytoplasm"/>
    <property type="evidence" value="ECO:0000318"/>
    <property type="project" value="GO_Central"/>
</dbReference>
<dbReference type="GO" id="GO:0043005">
    <property type="term" value="C:neuron projection"/>
    <property type="evidence" value="ECO:0000318"/>
    <property type="project" value="GO_Central"/>
</dbReference>
<dbReference type="GO" id="GO:0014069">
    <property type="term" value="C:postsynaptic density"/>
    <property type="evidence" value="ECO:0000318"/>
    <property type="project" value="GO_Central"/>
</dbReference>
<dbReference type="GO" id="GO:0033017">
    <property type="term" value="C:sarcoplasmic reticulum membrane"/>
    <property type="evidence" value="ECO:0007669"/>
    <property type="project" value="UniProtKB-SubCell"/>
</dbReference>
<dbReference type="GO" id="GO:0005524">
    <property type="term" value="F:ATP binding"/>
    <property type="evidence" value="ECO:0007669"/>
    <property type="project" value="UniProtKB-KW"/>
</dbReference>
<dbReference type="GO" id="GO:0004683">
    <property type="term" value="F:calcium/calmodulin-dependent protein kinase activity"/>
    <property type="evidence" value="ECO:0000250"/>
    <property type="project" value="UniProtKB"/>
</dbReference>
<dbReference type="GO" id="GO:0005516">
    <property type="term" value="F:calmodulin binding"/>
    <property type="evidence" value="ECO:0000318"/>
    <property type="project" value="GO_Central"/>
</dbReference>
<dbReference type="GO" id="GO:0106310">
    <property type="term" value="F:protein serine kinase activity"/>
    <property type="evidence" value="ECO:0007669"/>
    <property type="project" value="RHEA"/>
</dbReference>
<dbReference type="GO" id="GO:0030154">
    <property type="term" value="P:cell differentiation"/>
    <property type="evidence" value="ECO:0007669"/>
    <property type="project" value="UniProtKB-KW"/>
</dbReference>
<dbReference type="GO" id="GO:0007399">
    <property type="term" value="P:nervous system development"/>
    <property type="evidence" value="ECO:0007669"/>
    <property type="project" value="UniProtKB-KW"/>
</dbReference>
<dbReference type="GO" id="GO:0061003">
    <property type="term" value="P:positive regulation of dendritic spine morphogenesis"/>
    <property type="evidence" value="ECO:0000250"/>
    <property type="project" value="UniProtKB"/>
</dbReference>
<dbReference type="GO" id="GO:0010976">
    <property type="term" value="P:positive regulation of neuron projection development"/>
    <property type="evidence" value="ECO:0000250"/>
    <property type="project" value="UniProtKB"/>
</dbReference>
<dbReference type="GO" id="GO:0090129">
    <property type="term" value="P:positive regulation of synapse maturation"/>
    <property type="evidence" value="ECO:0000250"/>
    <property type="project" value="UniProtKB"/>
</dbReference>
<dbReference type="GO" id="GO:0046777">
    <property type="term" value="P:protein autophosphorylation"/>
    <property type="evidence" value="ECO:0000250"/>
    <property type="project" value="UniProtKB"/>
</dbReference>
<dbReference type="GO" id="GO:2001222">
    <property type="term" value="P:regulation of neuron migration"/>
    <property type="evidence" value="ECO:0000250"/>
    <property type="project" value="UniProtKB"/>
</dbReference>
<dbReference type="GO" id="GO:0048168">
    <property type="term" value="P:regulation of neuronal synaptic plasticity"/>
    <property type="evidence" value="ECO:0000318"/>
    <property type="project" value="GO_Central"/>
</dbReference>
<dbReference type="GO" id="GO:1903076">
    <property type="term" value="P:regulation of protein localization to plasma membrane"/>
    <property type="evidence" value="ECO:0000318"/>
    <property type="project" value="GO_Central"/>
</dbReference>
<dbReference type="CDD" id="cd14086">
    <property type="entry name" value="STKc_CaMKII"/>
    <property type="match status" value="1"/>
</dbReference>
<dbReference type="FunFam" id="1.10.510.10:FF:000001">
    <property type="entry name" value="Calcium/calmodulin-dependent protein kinase type II subunit delta"/>
    <property type="match status" value="1"/>
</dbReference>
<dbReference type="FunFam" id="3.30.200.20:FF:000002">
    <property type="entry name" value="Calcium/calmodulin-dependent protein kinase type II subunit delta isoform 2"/>
    <property type="match status" value="1"/>
</dbReference>
<dbReference type="FunFam" id="3.10.450.50:FF:000001">
    <property type="entry name" value="calcium/calmodulin-dependent protein kinase type II subunit gamma isoform X1"/>
    <property type="match status" value="1"/>
</dbReference>
<dbReference type="Gene3D" id="3.10.450.50">
    <property type="match status" value="1"/>
</dbReference>
<dbReference type="Gene3D" id="6.10.140.620">
    <property type="match status" value="1"/>
</dbReference>
<dbReference type="Gene3D" id="3.30.200.20">
    <property type="entry name" value="Phosphorylase Kinase, domain 1"/>
    <property type="match status" value="1"/>
</dbReference>
<dbReference type="Gene3D" id="1.10.510.10">
    <property type="entry name" value="Transferase(Phosphotransferase) domain 1"/>
    <property type="match status" value="1"/>
</dbReference>
<dbReference type="InterPro" id="IPR013543">
    <property type="entry name" value="Ca/CaM-dep_prot_kinase-assoc"/>
</dbReference>
<dbReference type="InterPro" id="IPR011009">
    <property type="entry name" value="Kinase-like_dom_sf"/>
</dbReference>
<dbReference type="InterPro" id="IPR032710">
    <property type="entry name" value="NTF2-like_dom_sf"/>
</dbReference>
<dbReference type="InterPro" id="IPR000719">
    <property type="entry name" value="Prot_kinase_dom"/>
</dbReference>
<dbReference type="InterPro" id="IPR017441">
    <property type="entry name" value="Protein_kinase_ATP_BS"/>
</dbReference>
<dbReference type="InterPro" id="IPR008271">
    <property type="entry name" value="Ser/Thr_kinase_AS"/>
</dbReference>
<dbReference type="PANTHER" id="PTHR24347">
    <property type="entry name" value="SERINE/THREONINE-PROTEIN KINASE"/>
    <property type="match status" value="1"/>
</dbReference>
<dbReference type="Pfam" id="PF08332">
    <property type="entry name" value="CaMKII_AD"/>
    <property type="match status" value="1"/>
</dbReference>
<dbReference type="Pfam" id="PF00069">
    <property type="entry name" value="Pkinase"/>
    <property type="match status" value="1"/>
</dbReference>
<dbReference type="SMART" id="SM00220">
    <property type="entry name" value="S_TKc"/>
    <property type="match status" value="1"/>
</dbReference>
<dbReference type="SUPFAM" id="SSF54427">
    <property type="entry name" value="NTF2-like"/>
    <property type="match status" value="1"/>
</dbReference>
<dbReference type="SUPFAM" id="SSF56112">
    <property type="entry name" value="Protein kinase-like (PK-like)"/>
    <property type="match status" value="1"/>
</dbReference>
<dbReference type="PROSITE" id="PS00107">
    <property type="entry name" value="PROTEIN_KINASE_ATP"/>
    <property type="match status" value="1"/>
</dbReference>
<dbReference type="PROSITE" id="PS50011">
    <property type="entry name" value="PROTEIN_KINASE_DOM"/>
    <property type="match status" value="1"/>
</dbReference>
<dbReference type="PROSITE" id="PS00108">
    <property type="entry name" value="PROTEIN_KINASE_ST"/>
    <property type="match status" value="1"/>
</dbReference>
<accession>Q3MHJ9</accession>
<proteinExistence type="evidence at transcript level"/>
<organism>
    <name type="scientific">Bos taurus</name>
    <name type="common">Bovine</name>
    <dbReference type="NCBI Taxonomy" id="9913"/>
    <lineage>
        <taxon>Eukaryota</taxon>
        <taxon>Metazoa</taxon>
        <taxon>Chordata</taxon>
        <taxon>Craniata</taxon>
        <taxon>Vertebrata</taxon>
        <taxon>Euteleostomi</taxon>
        <taxon>Mammalia</taxon>
        <taxon>Eutheria</taxon>
        <taxon>Laurasiatheria</taxon>
        <taxon>Artiodactyla</taxon>
        <taxon>Ruminantia</taxon>
        <taxon>Pecora</taxon>
        <taxon>Bovidae</taxon>
        <taxon>Bovinae</taxon>
        <taxon>Bos</taxon>
    </lineage>
</organism>
<comment type="function">
    <text evidence="2 4">Calcium/calmodulin-dependent protein kinase that functions autonomously after Ca(2+)/calmodulin-binding and autophosphorylation, and is involved in dendritic spine and synapse formation, neuronal plasticity and regulation of sarcoplasmic reticulum Ca(2+) transport in skeletal muscle. In neurons, plays an essential structural role in the reorganization of the actin cytoskeleton during plasticity by binding and bundling actin filaments in a kinase-independent manner. This structural function is required for correct targeting of CaMK2A, which acts downstream of NMDAR to promote dendritic spine and synapse formation and maintain synaptic plasticity which enables long-term potentiation (LTP) and hippocampus-dependent learning. In developing hippocampal neurons, promotes arborization of the dendritic tree and in mature neurons, promotes dendritic remodeling. Also regulates the migration of developing neurons. Participates in the modulation of skeletal muscle function in response to exercise. In slow-twitch muscles, is involved in regulation of sarcoplasmic reticulum (SR) Ca(2+) transport and in fast-twitch muscle participates in the control of Ca(2+) release from the SR through phosphorylation of triadin, a ryanodine receptor-coupling factor, and phospholamban (PLN/PLB), an endogenous inhibitor of SERCA2A/ATP2A2. In response to interferon-gamma (IFN-gamma) stimulation, catalyzes phosphorylation of STAT1, stimulating the JAK-STAT signaling pathway. Phosphorylates reticulophagy regulator RETREG1 at 'Ser-147' under endoplasmic reticulum stress conditions which enhances RETREG1 oligomerization and its membrane scission and reticulophagy activity.</text>
</comment>
<comment type="catalytic activity">
    <reaction evidence="4">
        <text>L-seryl-[protein] + ATP = O-phospho-L-seryl-[protein] + ADP + H(+)</text>
        <dbReference type="Rhea" id="RHEA:17989"/>
        <dbReference type="Rhea" id="RHEA-COMP:9863"/>
        <dbReference type="Rhea" id="RHEA-COMP:11604"/>
        <dbReference type="ChEBI" id="CHEBI:15378"/>
        <dbReference type="ChEBI" id="CHEBI:29999"/>
        <dbReference type="ChEBI" id="CHEBI:30616"/>
        <dbReference type="ChEBI" id="CHEBI:83421"/>
        <dbReference type="ChEBI" id="CHEBI:456216"/>
        <dbReference type="EC" id="2.7.11.17"/>
    </reaction>
</comment>
<comment type="catalytic activity">
    <reaction>
        <text>L-threonyl-[protein] + ATP = O-phospho-L-threonyl-[protein] + ADP + H(+)</text>
        <dbReference type="Rhea" id="RHEA:46608"/>
        <dbReference type="Rhea" id="RHEA-COMP:11060"/>
        <dbReference type="Rhea" id="RHEA-COMP:11605"/>
        <dbReference type="ChEBI" id="CHEBI:15378"/>
        <dbReference type="ChEBI" id="CHEBI:30013"/>
        <dbReference type="ChEBI" id="CHEBI:30616"/>
        <dbReference type="ChEBI" id="CHEBI:61977"/>
        <dbReference type="ChEBI" id="CHEBI:456216"/>
        <dbReference type="EC" id="2.7.11.17"/>
    </reaction>
</comment>
<comment type="activity regulation">
    <text evidence="1">Activated by Ca(2+)/calmodulin. Binding of calmodulin results in conformational change that relieves intrasteric autoinhibition and allows autophosphorylation of Thr-287 which turns the kinase in a constitutively active form and confers to the kinase a Ca(2+)-independent activity (By similarity).</text>
</comment>
<comment type="subunit">
    <text evidence="2 4">CAMK2 is composed of 4 different chains: alpha (CAMK2A), beta (CAMK2B), gamma (CAMK2G), and delta (CAMK2D). The different isoforms assemble into homo- or heteromultimeric holoenzymes composed of 12 subunits with two hexameric rings stacked one on top of the other. Interacts with SYNGAP1, CAMK2N2 and MPDZ. Interacts with FOXO3. Interacts (when in a kinase inactive state not associated with calmodulin) with ARC; leading to target ARC to inactive synapses. Interacts with CAMK2N1; this interaction requires CAMK2B activation by Ca(2+) (By similarity).</text>
</comment>
<comment type="subcellular location">
    <subcellularLocation>
        <location>Cytoplasm</location>
        <location>Cytoskeleton</location>
    </subcellularLocation>
    <subcellularLocation>
        <location>Cytoplasm</location>
        <location>Cytoskeleton</location>
        <location>Microtubule organizing center</location>
        <location>Centrosome</location>
    </subcellularLocation>
    <subcellularLocation>
        <location evidence="1">Sarcoplasmic reticulum membrane</location>
        <topology evidence="1">Peripheral membrane protein</topology>
        <orientation evidence="1">Cytoplasmic side</orientation>
    </subcellularLocation>
    <subcellularLocation>
        <location evidence="2">Synapse</location>
    </subcellularLocation>
</comment>
<comment type="domain">
    <text>The CAMK2 protein kinases contain a unique C-terminal subunit association domain responsible for oligomerization.</text>
</comment>
<comment type="PTM">
    <text evidence="1">Autophosphorylation of Thr-287 following activation by Ca(2+)/calmodulin. Phosphorylation of Thr-287 locks the kinase into an activated state (By similarity).</text>
</comment>
<comment type="similarity">
    <text evidence="8">Belongs to the protein kinase superfamily. CAMK Ser/Thr protein kinase family. CaMK subfamily.</text>
</comment>
<sequence length="542" mass="60482">MATTVTCTRFTDEYQLYEDIGKGAFSVVRRCVKLCTGHEYAAKIINTKKLSARDHQKLEREARICRLLKHSNIVRLHDSISEEGFHYLVFDLVTGGELFEDIVAREYYSEADASHCIQQILEAVLHCHQMGVVHRDLKPENLLLASKCKGAAVKLADFGLAIEVQGDQQAWFGFAGTPGYLSPEVLRKEAYGKPVDIWACGVILYILLVGYPPFWDEDQHKLYQQIKAGAYDFPSPEWDTVTPEAKNLINQMLTINPAKRIMAHEALKHPWVCQRSTVASMMHRQETVECLKKFNARRKLKGAILTTMLATRNFSVGRQTTAPATMSTAASGATMGLVEQAKSLLNKKADGVKPQTNSTKNSAAATSPKGTLPPAALEPQTTVIHNPVDGIKESSDSTHTTIEDEDTKARKQEIIKITEQLIEAVNNGDFEAYAKICDPGLTSFEPEALGNLVEGMDFHRFYFENLLAKNSKPIHTTILNPHVHVIGEDAACIAYIRLTQYIDGQGRPRTSQSEETRVWHRRDGKWQNVHFHCSGAPVAPLQ</sequence>